<organism>
    <name type="scientific">Chlorobium limicola (strain DSM 245 / NBRC 103803 / 6330)</name>
    <dbReference type="NCBI Taxonomy" id="290315"/>
    <lineage>
        <taxon>Bacteria</taxon>
        <taxon>Pseudomonadati</taxon>
        <taxon>Chlorobiota</taxon>
        <taxon>Chlorobiia</taxon>
        <taxon>Chlorobiales</taxon>
        <taxon>Chlorobiaceae</taxon>
        <taxon>Chlorobium/Pelodictyon group</taxon>
        <taxon>Chlorobium</taxon>
    </lineage>
</organism>
<reference key="1">
    <citation type="submission" date="2008-05" db="EMBL/GenBank/DDBJ databases">
        <title>Complete sequence of Chlorobium limicola DSM 245.</title>
        <authorList>
            <consortium name="US DOE Joint Genome Institute"/>
            <person name="Lucas S."/>
            <person name="Copeland A."/>
            <person name="Lapidus A."/>
            <person name="Glavina del Rio T."/>
            <person name="Dalin E."/>
            <person name="Tice H."/>
            <person name="Bruce D."/>
            <person name="Goodwin L."/>
            <person name="Pitluck S."/>
            <person name="Schmutz J."/>
            <person name="Larimer F."/>
            <person name="Land M."/>
            <person name="Hauser L."/>
            <person name="Kyrpides N."/>
            <person name="Ovchinnikova G."/>
            <person name="Zhao F."/>
            <person name="Li T."/>
            <person name="Liu Z."/>
            <person name="Overmann J."/>
            <person name="Bryant D.A."/>
            <person name="Richardson P."/>
        </authorList>
    </citation>
    <scope>NUCLEOTIDE SEQUENCE [LARGE SCALE GENOMIC DNA]</scope>
    <source>
        <strain>DSM 245 / NBRC 103803 / 6330</strain>
    </source>
</reference>
<protein>
    <recommendedName>
        <fullName evidence="1">Acyl carrier protein</fullName>
        <shortName evidence="1">ACP</shortName>
    </recommendedName>
</protein>
<gene>
    <name evidence="1" type="primary">acpP</name>
    <name type="ordered locus">Clim_0166</name>
</gene>
<name>ACP_CHLL2</name>
<evidence type="ECO:0000255" key="1">
    <source>
        <dbReference type="HAMAP-Rule" id="MF_01217"/>
    </source>
</evidence>
<evidence type="ECO:0000255" key="2">
    <source>
        <dbReference type="PROSITE-ProRule" id="PRU00258"/>
    </source>
</evidence>
<comment type="function">
    <text evidence="1">Carrier of the growing fatty acid chain in fatty acid biosynthesis.</text>
</comment>
<comment type="pathway">
    <text evidence="1">Lipid metabolism; fatty acid biosynthesis.</text>
</comment>
<comment type="subcellular location">
    <subcellularLocation>
        <location evidence="1">Cytoplasm</location>
    </subcellularLocation>
</comment>
<comment type="PTM">
    <text evidence="1">4'-phosphopantetheine is transferred from CoA to a specific serine of apo-ACP by AcpS. This modification is essential for activity because fatty acids are bound in thioester linkage to the sulfhydryl of the prosthetic group.</text>
</comment>
<comment type="similarity">
    <text evidence="1">Belongs to the acyl carrier protein (ACP) family.</text>
</comment>
<feature type="chain" id="PRO_1000139009" description="Acyl carrier protein">
    <location>
        <begin position="1"/>
        <end position="78"/>
    </location>
</feature>
<feature type="domain" description="Carrier" evidence="2">
    <location>
        <begin position="4"/>
        <end position="78"/>
    </location>
</feature>
<feature type="modified residue" description="O-(pantetheine 4'-phosphoryl)serine" evidence="2">
    <location>
        <position position="39"/>
    </location>
</feature>
<keyword id="KW-0963">Cytoplasm</keyword>
<keyword id="KW-0275">Fatty acid biosynthesis</keyword>
<keyword id="KW-0276">Fatty acid metabolism</keyword>
<keyword id="KW-0444">Lipid biosynthesis</keyword>
<keyword id="KW-0443">Lipid metabolism</keyword>
<keyword id="KW-0596">Phosphopantetheine</keyword>
<keyword id="KW-0597">Phosphoprotein</keyword>
<dbReference type="EMBL" id="CP001097">
    <property type="protein sequence ID" value="ACD89265.1"/>
    <property type="molecule type" value="Genomic_DNA"/>
</dbReference>
<dbReference type="RefSeq" id="WP_012465146.1">
    <property type="nucleotide sequence ID" value="NC_010803.1"/>
</dbReference>
<dbReference type="SMR" id="B3EED1"/>
<dbReference type="STRING" id="290315.Clim_0166"/>
<dbReference type="KEGG" id="cli:Clim_0166"/>
<dbReference type="eggNOG" id="COG0236">
    <property type="taxonomic scope" value="Bacteria"/>
</dbReference>
<dbReference type="HOGENOM" id="CLU_108696_5_1_10"/>
<dbReference type="OrthoDB" id="9804551at2"/>
<dbReference type="UniPathway" id="UPA00094"/>
<dbReference type="Proteomes" id="UP000008841">
    <property type="component" value="Chromosome"/>
</dbReference>
<dbReference type="GO" id="GO:0005829">
    <property type="term" value="C:cytosol"/>
    <property type="evidence" value="ECO:0007669"/>
    <property type="project" value="TreeGrafter"/>
</dbReference>
<dbReference type="GO" id="GO:0016020">
    <property type="term" value="C:membrane"/>
    <property type="evidence" value="ECO:0007669"/>
    <property type="project" value="GOC"/>
</dbReference>
<dbReference type="GO" id="GO:0000035">
    <property type="term" value="F:acyl binding"/>
    <property type="evidence" value="ECO:0007669"/>
    <property type="project" value="TreeGrafter"/>
</dbReference>
<dbReference type="GO" id="GO:0000036">
    <property type="term" value="F:acyl carrier activity"/>
    <property type="evidence" value="ECO:0007669"/>
    <property type="project" value="UniProtKB-UniRule"/>
</dbReference>
<dbReference type="GO" id="GO:0009245">
    <property type="term" value="P:lipid A biosynthetic process"/>
    <property type="evidence" value="ECO:0007669"/>
    <property type="project" value="TreeGrafter"/>
</dbReference>
<dbReference type="FunFam" id="1.10.1200.10:FF:000001">
    <property type="entry name" value="Acyl carrier protein"/>
    <property type="match status" value="1"/>
</dbReference>
<dbReference type="Gene3D" id="1.10.1200.10">
    <property type="entry name" value="ACP-like"/>
    <property type="match status" value="1"/>
</dbReference>
<dbReference type="HAMAP" id="MF_01217">
    <property type="entry name" value="Acyl_carrier"/>
    <property type="match status" value="1"/>
</dbReference>
<dbReference type="InterPro" id="IPR003231">
    <property type="entry name" value="ACP"/>
</dbReference>
<dbReference type="InterPro" id="IPR036736">
    <property type="entry name" value="ACP-like_sf"/>
</dbReference>
<dbReference type="InterPro" id="IPR009081">
    <property type="entry name" value="PP-bd_ACP"/>
</dbReference>
<dbReference type="InterPro" id="IPR006162">
    <property type="entry name" value="Ppantetheine_attach_site"/>
</dbReference>
<dbReference type="NCBIfam" id="TIGR00517">
    <property type="entry name" value="acyl_carrier"/>
    <property type="match status" value="1"/>
</dbReference>
<dbReference type="NCBIfam" id="NF002148">
    <property type="entry name" value="PRK00982.1-2"/>
    <property type="match status" value="1"/>
</dbReference>
<dbReference type="NCBIfam" id="NF002149">
    <property type="entry name" value="PRK00982.1-3"/>
    <property type="match status" value="1"/>
</dbReference>
<dbReference type="NCBIfam" id="NF002150">
    <property type="entry name" value="PRK00982.1-4"/>
    <property type="match status" value="1"/>
</dbReference>
<dbReference type="NCBIfam" id="NF002151">
    <property type="entry name" value="PRK00982.1-5"/>
    <property type="match status" value="1"/>
</dbReference>
<dbReference type="PANTHER" id="PTHR20863">
    <property type="entry name" value="ACYL CARRIER PROTEIN"/>
    <property type="match status" value="1"/>
</dbReference>
<dbReference type="PANTHER" id="PTHR20863:SF76">
    <property type="entry name" value="CARRIER DOMAIN-CONTAINING PROTEIN"/>
    <property type="match status" value="1"/>
</dbReference>
<dbReference type="Pfam" id="PF00550">
    <property type="entry name" value="PP-binding"/>
    <property type="match status" value="1"/>
</dbReference>
<dbReference type="SUPFAM" id="SSF47336">
    <property type="entry name" value="ACP-like"/>
    <property type="match status" value="1"/>
</dbReference>
<dbReference type="PROSITE" id="PS50075">
    <property type="entry name" value="CARRIER"/>
    <property type="match status" value="1"/>
</dbReference>
<dbReference type="PROSITE" id="PS00012">
    <property type="entry name" value="PHOSPHOPANTETHEINE"/>
    <property type="match status" value="1"/>
</dbReference>
<sequence>MSEAEIKDKVYDIIVSKMGVNKDQIKPESKFSDDLGADSLDTVELIMELENEFGVQIPDEDAEKISTVQQAIDYIVKK</sequence>
<accession>B3EED1</accession>
<proteinExistence type="inferred from homology"/>